<organism>
    <name type="scientific">Aspergillus fumigatus (strain ATCC MYA-4609 / CBS 101355 / FGSC A1100 / Af293)</name>
    <name type="common">Neosartorya fumigata</name>
    <dbReference type="NCBI Taxonomy" id="330879"/>
    <lineage>
        <taxon>Eukaryota</taxon>
        <taxon>Fungi</taxon>
        <taxon>Dikarya</taxon>
        <taxon>Ascomycota</taxon>
        <taxon>Pezizomycotina</taxon>
        <taxon>Eurotiomycetes</taxon>
        <taxon>Eurotiomycetidae</taxon>
        <taxon>Eurotiales</taxon>
        <taxon>Aspergillaceae</taxon>
        <taxon>Aspergillus</taxon>
        <taxon>Aspergillus subgen. Fumigati</taxon>
    </lineage>
</organism>
<accession>Q4WYF1</accession>
<keyword id="KW-0159">Chromosome partition</keyword>
<keyword id="KW-0539">Nucleus</keyword>
<keyword id="KW-1185">Reference proteome</keyword>
<keyword id="KW-0804">Transcription</keyword>
<keyword id="KW-0805">Transcription regulation</keyword>
<reference key="1">
    <citation type="journal article" date="2005" name="Nature">
        <title>Genomic sequence of the pathogenic and allergenic filamentous fungus Aspergillus fumigatus.</title>
        <authorList>
            <person name="Nierman W.C."/>
            <person name="Pain A."/>
            <person name="Anderson M.J."/>
            <person name="Wortman J.R."/>
            <person name="Kim H.S."/>
            <person name="Arroyo J."/>
            <person name="Berriman M."/>
            <person name="Abe K."/>
            <person name="Archer D.B."/>
            <person name="Bermejo C."/>
            <person name="Bennett J.W."/>
            <person name="Bowyer P."/>
            <person name="Chen D."/>
            <person name="Collins M."/>
            <person name="Coulsen R."/>
            <person name="Davies R."/>
            <person name="Dyer P.S."/>
            <person name="Farman M.L."/>
            <person name="Fedorova N."/>
            <person name="Fedorova N.D."/>
            <person name="Feldblyum T.V."/>
            <person name="Fischer R."/>
            <person name="Fosker N."/>
            <person name="Fraser A."/>
            <person name="Garcia J.L."/>
            <person name="Garcia M.J."/>
            <person name="Goble A."/>
            <person name="Goldman G.H."/>
            <person name="Gomi K."/>
            <person name="Griffith-Jones S."/>
            <person name="Gwilliam R."/>
            <person name="Haas B.J."/>
            <person name="Haas H."/>
            <person name="Harris D.E."/>
            <person name="Horiuchi H."/>
            <person name="Huang J."/>
            <person name="Humphray S."/>
            <person name="Jimenez J."/>
            <person name="Keller N."/>
            <person name="Khouri H."/>
            <person name="Kitamoto K."/>
            <person name="Kobayashi T."/>
            <person name="Konzack S."/>
            <person name="Kulkarni R."/>
            <person name="Kumagai T."/>
            <person name="Lafton A."/>
            <person name="Latge J.-P."/>
            <person name="Li W."/>
            <person name="Lord A."/>
            <person name="Lu C."/>
            <person name="Majoros W.H."/>
            <person name="May G.S."/>
            <person name="Miller B.L."/>
            <person name="Mohamoud Y."/>
            <person name="Molina M."/>
            <person name="Monod M."/>
            <person name="Mouyna I."/>
            <person name="Mulligan S."/>
            <person name="Murphy L.D."/>
            <person name="O'Neil S."/>
            <person name="Paulsen I."/>
            <person name="Penalva M.A."/>
            <person name="Pertea M."/>
            <person name="Price C."/>
            <person name="Pritchard B.L."/>
            <person name="Quail M.A."/>
            <person name="Rabbinowitsch E."/>
            <person name="Rawlins N."/>
            <person name="Rajandream M.A."/>
            <person name="Reichard U."/>
            <person name="Renauld H."/>
            <person name="Robson G.D."/>
            <person name="Rodriguez de Cordoba S."/>
            <person name="Rodriguez-Pena J.M."/>
            <person name="Ronning C.M."/>
            <person name="Rutter S."/>
            <person name="Salzberg S.L."/>
            <person name="Sanchez M."/>
            <person name="Sanchez-Ferrero J.C."/>
            <person name="Saunders D."/>
            <person name="Seeger K."/>
            <person name="Squares R."/>
            <person name="Squares S."/>
            <person name="Takeuchi M."/>
            <person name="Tekaia F."/>
            <person name="Turner G."/>
            <person name="Vazquez de Aldana C.R."/>
            <person name="Weidman J."/>
            <person name="White O."/>
            <person name="Woodward J.R."/>
            <person name="Yu J.-H."/>
            <person name="Fraser C.M."/>
            <person name="Galagan J.E."/>
            <person name="Asai K."/>
            <person name="Machida M."/>
            <person name="Hall N."/>
            <person name="Barrell B.G."/>
            <person name="Denning D.W."/>
        </authorList>
    </citation>
    <scope>NUCLEOTIDE SEQUENCE [LARGE SCALE GENOMIC DNA]</scope>
    <source>
        <strain>ATCC MYA-4609 / CBS 101355 / FGSC A1100 / Af293</strain>
    </source>
</reference>
<proteinExistence type="inferred from homology"/>
<dbReference type="EMBL" id="AAHF01000002">
    <property type="protein sequence ID" value="EAL92302.1"/>
    <property type="molecule type" value="Genomic_DNA"/>
</dbReference>
<dbReference type="RefSeq" id="XP_754340.1">
    <property type="nucleotide sequence ID" value="XM_749247.1"/>
</dbReference>
<dbReference type="SMR" id="Q4WYF1"/>
<dbReference type="FunCoup" id="Q4WYF1">
    <property type="interactions" value="134"/>
</dbReference>
<dbReference type="STRING" id="330879.Q4WYF1"/>
<dbReference type="EnsemblFungi" id="EAL92302">
    <property type="protein sequence ID" value="EAL92302"/>
    <property type="gene ID" value="AFUA_3G12810"/>
</dbReference>
<dbReference type="GeneID" id="3512509"/>
<dbReference type="KEGG" id="afm:AFUA_3G12810"/>
<dbReference type="VEuPathDB" id="FungiDB:Afu3g12810"/>
<dbReference type="eggNOG" id="ENOG502QQX4">
    <property type="taxonomic scope" value="Eukaryota"/>
</dbReference>
<dbReference type="HOGENOM" id="CLU_001419_0_0_1"/>
<dbReference type="InParanoid" id="Q4WYF1"/>
<dbReference type="OMA" id="WETWYRL"/>
<dbReference type="OrthoDB" id="77564at2759"/>
<dbReference type="Proteomes" id="UP000002530">
    <property type="component" value="Chromosome 3"/>
</dbReference>
<dbReference type="GO" id="GO:0000417">
    <property type="term" value="C:HIR complex"/>
    <property type="evidence" value="ECO:0000318"/>
    <property type="project" value="GO_Central"/>
</dbReference>
<dbReference type="GO" id="GO:0005634">
    <property type="term" value="C:nucleus"/>
    <property type="evidence" value="ECO:0000318"/>
    <property type="project" value="GO_Central"/>
</dbReference>
<dbReference type="GO" id="GO:0006325">
    <property type="term" value="P:chromatin organization"/>
    <property type="evidence" value="ECO:0007669"/>
    <property type="project" value="InterPro"/>
</dbReference>
<dbReference type="GO" id="GO:0007059">
    <property type="term" value="P:chromosome segregation"/>
    <property type="evidence" value="ECO:0007669"/>
    <property type="project" value="UniProtKB-KW"/>
</dbReference>
<dbReference type="Gene3D" id="1.25.40.10">
    <property type="entry name" value="Tetratricopeptide repeat domain"/>
    <property type="match status" value="1"/>
</dbReference>
<dbReference type="InterPro" id="IPR033053">
    <property type="entry name" value="Hir3/CABIN1"/>
</dbReference>
<dbReference type="InterPro" id="IPR011990">
    <property type="entry name" value="TPR-like_helical_dom_sf"/>
</dbReference>
<dbReference type="PANTHER" id="PTHR15502">
    <property type="entry name" value="CALCINEURIN-BINDING PROTEIN CABIN 1-RELATED"/>
    <property type="match status" value="1"/>
</dbReference>
<dbReference type="PANTHER" id="PTHR15502:SF7">
    <property type="entry name" value="CALCINEURIN-BINDING PROTEIN CABIN-1"/>
    <property type="match status" value="1"/>
</dbReference>
<feature type="chain" id="PRO_0000256194" description="Histone transcription regulator 3 homolog">
    <location>
        <begin position="1"/>
        <end position="2019"/>
    </location>
</feature>
<feature type="region of interest" description="Disordered" evidence="2">
    <location>
        <begin position="319"/>
        <end position="467"/>
    </location>
</feature>
<feature type="region of interest" description="Disordered" evidence="2">
    <location>
        <begin position="1780"/>
        <end position="2019"/>
    </location>
</feature>
<feature type="compositionally biased region" description="Polar residues" evidence="2">
    <location>
        <begin position="334"/>
        <end position="347"/>
    </location>
</feature>
<feature type="compositionally biased region" description="Basic and acidic residues" evidence="2">
    <location>
        <begin position="380"/>
        <end position="407"/>
    </location>
</feature>
<feature type="compositionally biased region" description="Polar residues" evidence="2">
    <location>
        <begin position="411"/>
        <end position="426"/>
    </location>
</feature>
<feature type="compositionally biased region" description="Basic and acidic residues" evidence="2">
    <location>
        <begin position="1808"/>
        <end position="1817"/>
    </location>
</feature>
<feature type="compositionally biased region" description="Low complexity" evidence="2">
    <location>
        <begin position="1826"/>
        <end position="1851"/>
    </location>
</feature>
<feature type="compositionally biased region" description="Polar residues" evidence="2">
    <location>
        <begin position="1852"/>
        <end position="1863"/>
    </location>
</feature>
<feature type="compositionally biased region" description="Low complexity" evidence="2">
    <location>
        <begin position="1864"/>
        <end position="1874"/>
    </location>
</feature>
<feature type="compositionally biased region" description="Acidic residues" evidence="2">
    <location>
        <begin position="1875"/>
        <end position="1887"/>
    </location>
</feature>
<feature type="compositionally biased region" description="Basic and acidic residues" evidence="2">
    <location>
        <begin position="1888"/>
        <end position="1910"/>
    </location>
</feature>
<feature type="compositionally biased region" description="Acidic residues" evidence="2">
    <location>
        <begin position="1925"/>
        <end position="1939"/>
    </location>
</feature>
<feature type="compositionally biased region" description="Acidic residues" evidence="2">
    <location>
        <begin position="1947"/>
        <end position="2003"/>
    </location>
</feature>
<name>HIR3_ASPFU</name>
<gene>
    <name type="primary">hir3</name>
    <name type="ORF">AFUA_3G12810</name>
</gene>
<protein>
    <recommendedName>
        <fullName>Histone transcription regulator 3 homolog</fullName>
    </recommendedName>
</protein>
<comment type="function">
    <text evidence="1">Has a role in a nucleosome assembly pathway that is required for the integrity of heterochromatin and proper chromosome segregation.</text>
</comment>
<comment type="subcellular location">
    <subcellularLocation>
        <location evidence="1">Nucleus</location>
    </subcellularLocation>
</comment>
<comment type="similarity">
    <text evidence="3">Belongs to the HIR3 family.</text>
</comment>
<evidence type="ECO:0000250" key="1"/>
<evidence type="ECO:0000256" key="2">
    <source>
        <dbReference type="SAM" id="MobiDB-lite"/>
    </source>
</evidence>
<evidence type="ECO:0000305" key="3"/>
<sequence>MSSWVALNIEPDEAIEEEVDDTKEIQIEEALKLYQNALKLHSQGPQFYAQAAEAYEALLSSDIFKYPESISDFKRSALQDSEAHLDDDVAVIDAVETFPEFSVNDSTSSTLLQTIYLSYKNHGQFTLDTLQAFLQENPRTSDKAQEILSQVSKRTHAALASFAEALERDDTDLNLWRRSARLSNALQSYRLVRYCLESVLADDENCLEVRTDQLGLDETFAQGQLRETLQALDDNLSVSQVPLKKPKKALLRFLERQKDPYPYLPALPSHVRDEDPSKNPLAIRASCYQLTPASHTWAAVGDSILQALIDMERDASKFGPGTSIRFSMPESTADLRSSTAGEVADQDQSSHMENGESANHIPEEDVDIANTTESAAPKTLRKDQDASSILEHVDDQSSIDQRAEKQLMESLENQSARQNDATTVQDVPNVDEVEPNPSSAGRKRPSASAANEDYQAEPVRTKSRRTRLRDSIAETSLQSDEVSFDQNKYYEDRLQTYVEADEWMFDTVGPLLSKLGVDKLESLDELRRQSAANCSKSSVERSSNQPTSAVHVLYRDLDSIVKTWDEAKSQAMLQDDTSLTFQDMKAMDNSGLTIFLEHSRKSARKTGLKPSFTDDKVLSKFLKGVNEEWLHLHEVGFAWLKLLLMPVYGKSPVRKNSRSKKWPVMESAYVAFQWPDVLKEKVVQLLVRDDEYIFRKMREQAEQTELQILNHTPQTPFKYTRDHLAYLEMTQTVFEIHLDVYASINNPHSEVDQDTRLVQRDRLMRWSMLARTALSHYLDHGPSRKDSQNSIILRHIWASTFHSNMEPDVHREHILLCLQDLKEMLHRLSILEIHLMNNAMMPELSADAIDQEISKLNSMDFFMKIFTPGSEDPVELIETIEPIVEPSSVEIPEESESNDQSLSQSMVQLKEMRSFLDRGDAMLKLFLWQRLRDAYQAIDYPPKVVSCYLRSVETIIQELLGASYLEESNEHREIALIRWLKSLDRILMKLVTLVLQQSDKAYECLDMEHLRSSMSALTTLTNLLHSFALYEDSVRVGQTPSSSVRGSLSKSLGNFTEKLREMEVRCWILQYTLLKEAITQNGDLFESPLEDRILFLRSVHNALGIRKMCKRSNKQFLKLMKAEFFSLESKEAYESEICQILWDLYGINLSPPGRFLFEHECPPEKLDRSTAIKLVDFVLKLAKRMNIKDLSKSELKSTIEKIQQAIGTTKSSPPLTYNKRILSAYLKSPINPTEIFRAVRGVADLPLVPVPTESAVIAQNGWYFLLGHAALTKFRSQKRLNPVPTTDLDEAITFFRQDLDHATGRWESWYRLAQTYDSKLEEDITWSADKINNNRTELVTWQRNAIHCYAMAVATAIRSAEPTPETRATLSELYTDFGIRLYSSSREPLSMAAFSLADFTRHYSNEESQRMYQGKPFKEMRLYSVWNLARYLLKRATIDKPKSWMNHYMLSKCLWKMFSCDDSVRGNAQRISVDDLLDSLLDAIDTLPQRKDSRSDPIFEPHYKLVSIVHKLVDRGTLTPAEGSQTLMATPLARKVQPPEDKAGWKPYILEVLRRLKHADKSNWHHRMAVRAAHVTYDDTRDTVSAAAAKNELTQQIFTKTMTIQVWRPEFERPGRHFVYTTRYVYFFVSLLDQLNDRANLDQLLRRVRKKQGDFINHTKLWEDVCLTYAKVIRRAGSINEGHEENVFKPIGWEEFVANTARLENLPQLAPGSQVLLELLRDAIELKKLNNNLMKVSLLEDLIADLYSRLYEINMPQVLEQANEENKEKMKVDHLLMASDGAADTPTPPNSAPASEAPAPRGRTKGIARRDVQKRAETIVGRKLTPRAPAAKASVPAESEPPATSEPAAPSGNQPNKTSFEMGQQSDIPQSIQDSADDESELSEIDDEKLSKLAAERKLLFPNLRDRISPDPDSEMSVPASIDGDAADEVGDGDADLNEAEGGGETTVEEGEGEDGEEGDEADLERDENDGDEESLEEGEGNGEDTENAQDMEDEAEEPEVIEGDPPKENASEPEPMET</sequence>